<organism>
    <name type="scientific">Oryza sativa subsp. japonica</name>
    <name type="common">Rice</name>
    <dbReference type="NCBI Taxonomy" id="39947"/>
    <lineage>
        <taxon>Eukaryota</taxon>
        <taxon>Viridiplantae</taxon>
        <taxon>Streptophyta</taxon>
        <taxon>Embryophyta</taxon>
        <taxon>Tracheophyta</taxon>
        <taxon>Spermatophyta</taxon>
        <taxon>Magnoliopsida</taxon>
        <taxon>Liliopsida</taxon>
        <taxon>Poales</taxon>
        <taxon>Poaceae</taxon>
        <taxon>BOP clade</taxon>
        <taxon>Oryzoideae</taxon>
        <taxon>Oryzeae</taxon>
        <taxon>Oryzinae</taxon>
        <taxon>Oryza</taxon>
        <taxon>Oryza sativa</taxon>
    </lineage>
</organism>
<keyword id="KW-0025">Alternative splicing</keyword>
<keyword id="KW-0961">Cell wall biogenesis/degradation</keyword>
<keyword id="KW-0325">Glycoprotein</keyword>
<keyword id="KW-0328">Glycosyltransferase</keyword>
<keyword id="KW-0333">Golgi apparatus</keyword>
<keyword id="KW-0472">Membrane</keyword>
<keyword id="KW-1185">Reference proteome</keyword>
<keyword id="KW-0735">Signal-anchor</keyword>
<keyword id="KW-0808">Transferase</keyword>
<keyword id="KW-0812">Transmembrane</keyword>
<keyword id="KW-1133">Transmembrane helix</keyword>
<accession>Q6AT32</accession>
<accession>A0A023NDJ9</accession>
<proteinExistence type="evidence at transcript level"/>
<name>GT43E_ORYSJ</name>
<protein>
    <recommendedName>
        <fullName evidence="4">Probable beta-1,4-xylosyltransferase GT43E</fullName>
        <ecNumber evidence="4">2.4.2.-</ecNumber>
    </recommendedName>
    <alternativeName>
        <fullName evidence="3">OsGT43E</fullName>
    </alternativeName>
    <alternativeName>
        <fullName evidence="4">Probable glucuronosyltransferase Os05g0559600</fullName>
    </alternativeName>
</protein>
<feature type="chain" id="PRO_0000407559" description="Probable beta-1,4-xylosyltransferase GT43E">
    <location>
        <begin position="1"/>
        <end position="451"/>
    </location>
</feature>
<feature type="topological domain" description="Cytoplasmic" evidence="4">
    <location>
        <begin position="1"/>
        <end position="88"/>
    </location>
</feature>
<feature type="transmembrane region" description="Helical; Signal-anchor for type II membrane protein" evidence="1">
    <location>
        <begin position="89"/>
        <end position="109"/>
    </location>
</feature>
<feature type="topological domain" description="Lumenal" evidence="4">
    <location>
        <begin position="110"/>
        <end position="451"/>
    </location>
</feature>
<feature type="glycosylation site" description="N-linked (GlcNAc...) asparagine" evidence="1">
    <location>
        <position position="260"/>
    </location>
</feature>
<feature type="glycosylation site" description="N-linked (GlcNAc...) asparagine" evidence="1">
    <location>
        <position position="366"/>
    </location>
</feature>
<feature type="splice variant" id="VSP_040957" description="In isoform 2." evidence="4">
    <location>
        <begin position="21"/>
        <end position="59"/>
    </location>
</feature>
<gene>
    <name evidence="3" type="primary">GT43E</name>
    <name evidence="8" type="ordered locus">Os05g0559600</name>
    <name evidence="4" type="ordered locus">LOC_Os05g48600</name>
    <name evidence="7" type="ORF">OJ1115_B06.1</name>
    <name evidence="6" type="ORF">OSJNBa0001A14.15</name>
</gene>
<reference key="1">
    <citation type="journal article" date="2014" name="Plant Signal. Behav.">
        <title>Functional roles of rice glycosyltransferase family GT43 in xylan biosynthesis.</title>
        <authorList>
            <person name="Lee C."/>
            <person name="Teng Q."/>
            <person name="Zhong R."/>
            <person name="Yuan Y."/>
            <person name="Ye Z.H."/>
        </authorList>
    </citation>
    <scope>NUCLEOTIDE SEQUENCE [MRNA]</scope>
    <scope>FUNCTION</scope>
    <scope>SUBCELLULAR LOCATION</scope>
</reference>
<reference key="2">
    <citation type="journal article" date="2005" name="Mol. Genet. Genomics">
        <title>A fine physical map of the rice chromosome 5.</title>
        <authorList>
            <person name="Cheng C.-H."/>
            <person name="Chung M.C."/>
            <person name="Liu S.-M."/>
            <person name="Chen S.-K."/>
            <person name="Kao F.Y."/>
            <person name="Lin S.-J."/>
            <person name="Hsiao S.-H."/>
            <person name="Tseng I.C."/>
            <person name="Hsing Y.-I.C."/>
            <person name="Wu H.-P."/>
            <person name="Chen C.-S."/>
            <person name="Shaw J.-F."/>
            <person name="Wu J."/>
            <person name="Matsumoto T."/>
            <person name="Sasaki T."/>
            <person name="Chen H.-C."/>
            <person name="Chow T.-Y."/>
        </authorList>
    </citation>
    <scope>NUCLEOTIDE SEQUENCE [LARGE SCALE GENOMIC DNA]</scope>
    <source>
        <strain>cv. Nipponbare</strain>
    </source>
</reference>
<reference key="3">
    <citation type="journal article" date="2005" name="Nature">
        <title>The map-based sequence of the rice genome.</title>
        <authorList>
            <consortium name="International rice genome sequencing project (IRGSP)"/>
        </authorList>
    </citation>
    <scope>NUCLEOTIDE SEQUENCE [LARGE SCALE GENOMIC DNA]</scope>
    <source>
        <strain>cv. Nipponbare</strain>
    </source>
</reference>
<reference key="4">
    <citation type="journal article" date="2008" name="Nucleic Acids Res.">
        <title>The rice annotation project database (RAP-DB): 2008 update.</title>
        <authorList>
            <consortium name="The rice annotation project (RAP)"/>
        </authorList>
    </citation>
    <scope>GENOME REANNOTATION</scope>
    <source>
        <strain>cv. Nipponbare</strain>
    </source>
</reference>
<reference key="5">
    <citation type="journal article" date="2013" name="Rice">
        <title>Improvement of the Oryza sativa Nipponbare reference genome using next generation sequence and optical map data.</title>
        <authorList>
            <person name="Kawahara Y."/>
            <person name="de la Bastide M."/>
            <person name="Hamilton J.P."/>
            <person name="Kanamori H."/>
            <person name="McCombie W.R."/>
            <person name="Ouyang S."/>
            <person name="Schwartz D.C."/>
            <person name="Tanaka T."/>
            <person name="Wu J."/>
            <person name="Zhou S."/>
            <person name="Childs K.L."/>
            <person name="Davidson R.M."/>
            <person name="Lin H."/>
            <person name="Quesada-Ocampo L."/>
            <person name="Vaillancourt B."/>
            <person name="Sakai H."/>
            <person name="Lee S.S."/>
            <person name="Kim J."/>
            <person name="Numa H."/>
            <person name="Itoh T."/>
            <person name="Buell C.R."/>
            <person name="Matsumoto T."/>
        </authorList>
    </citation>
    <scope>GENOME REANNOTATION</scope>
    <source>
        <strain>cv. Nipponbare</strain>
    </source>
</reference>
<reference key="6">
    <citation type="journal article" date="2003" name="Science">
        <title>Collection, mapping, and annotation of over 28,000 cDNA clones from japonica rice.</title>
        <authorList>
            <consortium name="The rice full-length cDNA consortium"/>
        </authorList>
    </citation>
    <scope>NUCLEOTIDE SEQUENCE [LARGE SCALE MRNA] (ISOFORM 1)</scope>
    <source>
        <strain>cv. Nipponbare</strain>
    </source>
</reference>
<dbReference type="EC" id="2.4.2.-" evidence="4"/>
<dbReference type="EMBL" id="KJ206902">
    <property type="protein sequence ID" value="AHW98785.1"/>
    <property type="molecule type" value="mRNA"/>
</dbReference>
<dbReference type="EMBL" id="AC113333">
    <property type="protein sequence ID" value="AAU10637.1"/>
    <property type="molecule type" value="Genomic_DNA"/>
</dbReference>
<dbReference type="EMBL" id="AC144735">
    <property type="protein sequence ID" value="AAT85103.1"/>
    <property type="molecule type" value="Genomic_DNA"/>
</dbReference>
<dbReference type="EMBL" id="AP008211">
    <property type="protein sequence ID" value="BAF18215.1"/>
    <property type="molecule type" value="Genomic_DNA"/>
</dbReference>
<dbReference type="EMBL" id="AP014961">
    <property type="protein sequence ID" value="BAS95305.1"/>
    <property type="molecule type" value="Genomic_DNA"/>
</dbReference>
<dbReference type="EMBL" id="AK068237">
    <property type="protein sequence ID" value="BAG90818.1"/>
    <property type="molecule type" value="mRNA"/>
</dbReference>
<dbReference type="RefSeq" id="XP_015640357.1">
    <property type="nucleotide sequence ID" value="XM_015784871.1"/>
</dbReference>
<dbReference type="RefSeq" id="XP_015640358.1">
    <property type="nucleotide sequence ID" value="XM_015784872.1"/>
</dbReference>
<dbReference type="SMR" id="Q6AT32"/>
<dbReference type="FunCoup" id="Q6AT32">
    <property type="interactions" value="494"/>
</dbReference>
<dbReference type="STRING" id="39947.Q6AT32"/>
<dbReference type="CAZy" id="GT43">
    <property type="family name" value="Glycosyltransferase Family 43"/>
</dbReference>
<dbReference type="GlyCosmos" id="Q6AT32">
    <property type="glycosylation" value="2 sites, No reported glycans"/>
</dbReference>
<dbReference type="PaxDb" id="39947-Q6AT32"/>
<dbReference type="EnsemblPlants" id="Os05t0559600-01">
    <molecule id="Q6AT32-1"/>
    <property type="protein sequence ID" value="Os05t0559600-01"/>
    <property type="gene ID" value="Os05g0559600"/>
</dbReference>
<dbReference type="Gramene" id="Os05t0559600-01">
    <molecule id="Q6AT32-1"/>
    <property type="protein sequence ID" value="Os05t0559600-01"/>
    <property type="gene ID" value="Os05g0559600"/>
</dbReference>
<dbReference type="KEGG" id="dosa:Os05g0559600"/>
<dbReference type="eggNOG" id="KOG1476">
    <property type="taxonomic scope" value="Eukaryota"/>
</dbReference>
<dbReference type="HOGENOM" id="CLU_044006_0_0_1"/>
<dbReference type="InParanoid" id="Q6AT32"/>
<dbReference type="OMA" id="HTGLHEV"/>
<dbReference type="OrthoDB" id="675023at2759"/>
<dbReference type="PlantReactome" id="R-OSA-5654909">
    <property type="pathway name" value="Xylan biosynthesis"/>
</dbReference>
<dbReference type="Proteomes" id="UP000000763">
    <property type="component" value="Chromosome 5"/>
</dbReference>
<dbReference type="Proteomes" id="UP000059680">
    <property type="component" value="Chromosome 5"/>
</dbReference>
<dbReference type="GO" id="GO:0000139">
    <property type="term" value="C:Golgi membrane"/>
    <property type="evidence" value="ECO:0000314"/>
    <property type="project" value="UniProtKB"/>
</dbReference>
<dbReference type="GO" id="GO:0015018">
    <property type="term" value="F:galactosylgalactosylxylosylprotein 3-beta-glucuronosyltransferase activity"/>
    <property type="evidence" value="ECO:0007669"/>
    <property type="project" value="InterPro"/>
</dbReference>
<dbReference type="GO" id="GO:0042285">
    <property type="term" value="F:xylosyltransferase activity"/>
    <property type="evidence" value="ECO:0000318"/>
    <property type="project" value="GO_Central"/>
</dbReference>
<dbReference type="GO" id="GO:0071555">
    <property type="term" value="P:cell wall organization"/>
    <property type="evidence" value="ECO:0007669"/>
    <property type="project" value="UniProtKB-KW"/>
</dbReference>
<dbReference type="GO" id="GO:0010417">
    <property type="term" value="P:glucuronoxylan biosynthetic process"/>
    <property type="evidence" value="ECO:0000318"/>
    <property type="project" value="GO_Central"/>
</dbReference>
<dbReference type="GO" id="GO:0009834">
    <property type="term" value="P:plant-type secondary cell wall biogenesis"/>
    <property type="evidence" value="ECO:0000318"/>
    <property type="project" value="GO_Central"/>
</dbReference>
<dbReference type="GO" id="GO:0045492">
    <property type="term" value="P:xylan biosynthetic process"/>
    <property type="evidence" value="ECO:0000314"/>
    <property type="project" value="UniProtKB"/>
</dbReference>
<dbReference type="CDD" id="cd00218">
    <property type="entry name" value="GlcAT-I"/>
    <property type="match status" value="1"/>
</dbReference>
<dbReference type="FunFam" id="3.90.550.10:FF:000064">
    <property type="entry name" value="Glycosyltransferases"/>
    <property type="match status" value="1"/>
</dbReference>
<dbReference type="Gene3D" id="3.90.550.10">
    <property type="entry name" value="Spore Coat Polysaccharide Biosynthesis Protein SpsA, Chain A"/>
    <property type="match status" value="1"/>
</dbReference>
<dbReference type="InterPro" id="IPR005027">
    <property type="entry name" value="Glyco_trans_43"/>
</dbReference>
<dbReference type="InterPro" id="IPR029044">
    <property type="entry name" value="Nucleotide-diphossugar_trans"/>
</dbReference>
<dbReference type="PANTHER" id="PTHR10896:SF31">
    <property type="entry name" value="BETA-1,4-XYLOSYLTRANSFERASE GT43E-RELATED"/>
    <property type="match status" value="1"/>
</dbReference>
<dbReference type="PANTHER" id="PTHR10896">
    <property type="entry name" value="GALACTOSYLGALACTOSYLXYLOSYLPROTEIN 3-BETA-GLUCURONOSYLTRANSFERASE BETA-1,3-GLUCURONYLTRANSFERASE"/>
    <property type="match status" value="1"/>
</dbReference>
<dbReference type="Pfam" id="PF03360">
    <property type="entry name" value="Glyco_transf_43"/>
    <property type="match status" value="1"/>
</dbReference>
<dbReference type="SUPFAM" id="SSF53448">
    <property type="entry name" value="Nucleotide-diphospho-sugar transferases"/>
    <property type="match status" value="1"/>
</dbReference>
<sequence length="451" mass="51324">MVSSRRNTGGIQRDGSLRDWSEFVDPSPSPKLLYSQSYVAMRGLLSSLVSMDFALLSSRLKSAWAAILSQRHTRSPERSKSRGLSCKRLAFHLFVCFMVGIFIGFMPFFSVDVSQKIVSENGRLPFDEGAVDRGMVDGKVKELETIVVEKEVDIIDESEVEESPPVPAMLDDEADFVESAPAIPDINDLDITVRKLLIIVTITTVRPQQAYYLNRLAHVLKTVQSPLLWLVVEWPDQSFQTAEILRSSGVMYRHLICRKNTTSVRKIAVCQRNTAIYHIKKHRLDGIMHFADEERSYMSDVFEEMRKIRRFGAWPVAIHTGIKYRVVLEGPICKGNRVTGWNTIQNIQKKSAVRRFPVGFSGFAFNSTMLWDPERWNRPPMDSVIVHSGGRGGLQESRFIEKLVKHERQIEGLPEDCNRVMVWNFNLEPPLLNVPPGWSLHKNLDAVIPVT</sequence>
<comment type="function">
    <text evidence="2">Probable beta-1,4-xylosyltransferase involved in xylan biosynthesis in cell walls.</text>
</comment>
<comment type="subcellular location">
    <subcellularLocation>
        <location evidence="2">Golgi apparatus membrane</location>
        <topology evidence="5">Single-pass type II membrane protein</topology>
    </subcellularLocation>
</comment>
<comment type="alternative products">
    <event type="alternative splicing"/>
    <isoform>
        <id>Q6AT32-1</id>
        <name>1</name>
        <sequence type="displayed"/>
    </isoform>
    <isoform>
        <id>Q6AT32-2</id>
        <name>2</name>
        <sequence type="described" ref="VSP_040957"/>
    </isoform>
</comment>
<comment type="similarity">
    <text evidence="4">Belongs to the glycosyltransferase 43 family.</text>
</comment>
<evidence type="ECO:0000255" key="1"/>
<evidence type="ECO:0000269" key="2">
    <source>
    </source>
</evidence>
<evidence type="ECO:0000303" key="3">
    <source>
    </source>
</evidence>
<evidence type="ECO:0000305" key="4"/>
<evidence type="ECO:0000305" key="5">
    <source>
    </source>
</evidence>
<evidence type="ECO:0000312" key="6">
    <source>
        <dbReference type="EMBL" id="AAT85103.1"/>
    </source>
</evidence>
<evidence type="ECO:0000312" key="7">
    <source>
        <dbReference type="EMBL" id="AAU10637.1"/>
    </source>
</evidence>
<evidence type="ECO:0000312" key="8">
    <source>
        <dbReference type="EMBL" id="BAS95305.1"/>
    </source>
</evidence>